<protein>
    <recommendedName>
        <fullName>Enhancer of split mdelta protein</fullName>
        <shortName>E(spl)mdelta</shortName>
    </recommendedName>
    <alternativeName>
        <fullName>HLH-mdelta</fullName>
    </alternativeName>
    <alternativeName>
        <fullName>Split locus enhancer protein mC</fullName>
    </alternativeName>
</protein>
<comment type="function">
    <text evidence="1 6 7 8">Transcriptional repressor of genes that require a bHLH protein for their transcription (By similarity). May serve as a transcriptional regulator of the Achaete-scute complex (AS-C) genes (PubMed:1528887). Contributes to the neural-epidermal lineage decision during early neurogenesis (PubMed:1427040). As part of the Notch signaling pathway, required to maintain the self-renewal and identity of type II neuroblasts by regulating the expression of the transcriptional repressor erm (PubMed:28899667).</text>
</comment>
<comment type="subunit">
    <text evidence="1 2">Transcription repression requires formation of a complex with a corepressor protein (Groucho).</text>
</comment>
<comment type="interaction">
    <interactant intactId="EBI-118907">
        <id>Q01071</id>
    </interactant>
    <interactant intactId="EBI-167469">
        <id>Q24276</id>
        <label>Cdc37</label>
    </interactant>
    <organismsDiffer>false</organismsDiffer>
    <experiments>3</experiments>
</comment>
<comment type="interaction">
    <interactant intactId="EBI-118907">
        <id>Q01071</id>
    </interactant>
    <interactant intactId="EBI-153866">
        <id>P16371</id>
        <label>gro</label>
    </interactant>
    <organismsDiffer>false</organismsDiffer>
    <experiments>4</experiments>
</comment>
<comment type="subcellular location">
    <subcellularLocation>
        <location evidence="10">Nucleus</location>
    </subcellularLocation>
</comment>
<comment type="developmental stage">
    <text evidence="6">In embryo, expressed during the initial stages of germ band exclusively within the neuroectoderm, both in the territory of the trunk and in cephalic regions. During stage 9, expressed within the procephalic lobe and the ventral ectoderm.</text>
</comment>
<comment type="domain">
    <text evidence="9">Has a particular type of basic domain (presence of a helix-interrupting proline) that binds to the N-box (CACNAG), rather than the canonical E-box (CANNTG).</text>
</comment>
<comment type="domain">
    <text evidence="9">The C-terminal WRPW motif is a transcriptional repression domain necessary for the interaction with Groucho, a transcriptional corepressor recruited to specific target DNA by Hairy-related proteins.</text>
</comment>
<comment type="disruption phenotype">
    <text evidence="8">RNAi-mediated knockdown of the protein in the type II neuroblasts lineage results in an increase in the number of type II neuroblasts. Simultaneous RNAi-mediated knockdown of the ETS protein pnt restores normal neuroblast numbers.</text>
</comment>
<accession>Q01071</accession>
<accession>Q01897</accession>
<accession>Q4V723</accession>
<accession>Q56MT6</accession>
<accession>Q56MU1</accession>
<accession>Q56MU3</accession>
<accession>Q56MU4</accession>
<accession>Q56MU6</accession>
<accession>Q56MU8</accession>
<accession>Q56MV0</accession>
<accession>Q56MV5</accession>
<accession>Q56MV6</accession>
<accession>Q56MW2</accession>
<accession>Q56MW7</accession>
<accession>Q56MW9</accession>
<accession>Q56MX9</accession>
<accession>Q56MY0</accession>
<accession>Q56MY1</accession>
<accession>Q56N19</accession>
<accession>Q56N23</accession>
<accession>Q5S485</accession>
<accession>Q5S4A9</accession>
<accession>Q5S4K5</accession>
<reference key="1">
    <citation type="journal article" date="1992" name="Genetics">
        <title>Seven genes of the Enhancer of split complex of Drosophila melanogaster encode helix-loop-helix proteins.</title>
        <authorList>
            <person name="Knust E."/>
            <person name="Schrons H."/>
            <person name="Grawe F."/>
            <person name="Campos-Ortega J.A."/>
        </authorList>
    </citation>
    <scope>NUCLEOTIDE SEQUENCE [MRNA]</scope>
    <scope>FUNCTION</scope>
    <scope>DEVELOPMENTAL STAGE</scope>
    <source>
        <strain>Oregon-R</strain>
    </source>
</reference>
<reference key="2">
    <citation type="journal article" date="1992" name="Proc. Natl. Acad. Sci. U.S.A.">
        <title>The Enhancer of split [E(spl)] locus of Drosophila encodes seven independent helix-loop-helix proteins.</title>
        <authorList>
            <person name="Delidakis C."/>
            <person name="Artavanis-Tsakonas S."/>
        </authorList>
    </citation>
    <scope>NUCLEOTIDE SEQUENCE [GENOMIC DNA]</scope>
    <scope>FUNCTION</scope>
    <source>
        <tissue>Embryo</tissue>
    </source>
</reference>
<reference key="3">
    <citation type="journal article" date="2005" name="Mol. Biol. Evol.">
        <title>Identifying signatures of selection at the enhancer of split neurogenic gene complex in Drosophila.</title>
        <authorList>
            <person name="Macdonald S.J."/>
            <person name="Long A.D."/>
        </authorList>
    </citation>
    <scope>NUCLEOTIDE SEQUENCE [GENOMIC DNA]</scope>
    <source>
        <strain>NVIII-1</strain>
        <strain>NVIII-18</strain>
        <strain>NVIII-2</strain>
        <strain>NVIII-22</strain>
        <strain>NVIII-24</strain>
        <strain>NVIII-28</strain>
        <strain>NVIII-41</strain>
        <strain>NVIII-42</strain>
        <strain>NVIII-46</strain>
        <strain>NVIII-5</strain>
        <strain>NVIII-9</strain>
        <strain>NVIII-m11</strain>
        <strain>NVIII-m12</strain>
        <strain>NVIII-m13</strain>
        <strain>NVIII-m15</strain>
        <strain>NVIII-m19</strain>
    </source>
</reference>
<reference key="4">
    <citation type="journal article" date="2000" name="Science">
        <title>The genome sequence of Drosophila melanogaster.</title>
        <authorList>
            <person name="Adams M.D."/>
            <person name="Celniker S.E."/>
            <person name="Holt R.A."/>
            <person name="Evans C.A."/>
            <person name="Gocayne J.D."/>
            <person name="Amanatides P.G."/>
            <person name="Scherer S.E."/>
            <person name="Li P.W."/>
            <person name="Hoskins R.A."/>
            <person name="Galle R.F."/>
            <person name="George R.A."/>
            <person name="Lewis S.E."/>
            <person name="Richards S."/>
            <person name="Ashburner M."/>
            <person name="Henderson S.N."/>
            <person name="Sutton G.G."/>
            <person name="Wortman J.R."/>
            <person name="Yandell M.D."/>
            <person name="Zhang Q."/>
            <person name="Chen L.X."/>
            <person name="Brandon R.C."/>
            <person name="Rogers Y.-H.C."/>
            <person name="Blazej R.G."/>
            <person name="Champe M."/>
            <person name="Pfeiffer B.D."/>
            <person name="Wan K.H."/>
            <person name="Doyle C."/>
            <person name="Baxter E.G."/>
            <person name="Helt G."/>
            <person name="Nelson C.R."/>
            <person name="Miklos G.L.G."/>
            <person name="Abril J.F."/>
            <person name="Agbayani A."/>
            <person name="An H.-J."/>
            <person name="Andrews-Pfannkoch C."/>
            <person name="Baldwin D."/>
            <person name="Ballew R.M."/>
            <person name="Basu A."/>
            <person name="Baxendale J."/>
            <person name="Bayraktaroglu L."/>
            <person name="Beasley E.M."/>
            <person name="Beeson K.Y."/>
            <person name="Benos P.V."/>
            <person name="Berman B.P."/>
            <person name="Bhandari D."/>
            <person name="Bolshakov S."/>
            <person name="Borkova D."/>
            <person name="Botchan M.R."/>
            <person name="Bouck J."/>
            <person name="Brokstein P."/>
            <person name="Brottier P."/>
            <person name="Burtis K.C."/>
            <person name="Busam D.A."/>
            <person name="Butler H."/>
            <person name="Cadieu E."/>
            <person name="Center A."/>
            <person name="Chandra I."/>
            <person name="Cherry J.M."/>
            <person name="Cawley S."/>
            <person name="Dahlke C."/>
            <person name="Davenport L.B."/>
            <person name="Davies P."/>
            <person name="de Pablos B."/>
            <person name="Delcher A."/>
            <person name="Deng Z."/>
            <person name="Mays A.D."/>
            <person name="Dew I."/>
            <person name="Dietz S.M."/>
            <person name="Dodson K."/>
            <person name="Doup L.E."/>
            <person name="Downes M."/>
            <person name="Dugan-Rocha S."/>
            <person name="Dunkov B.C."/>
            <person name="Dunn P."/>
            <person name="Durbin K.J."/>
            <person name="Evangelista C.C."/>
            <person name="Ferraz C."/>
            <person name="Ferriera S."/>
            <person name="Fleischmann W."/>
            <person name="Fosler C."/>
            <person name="Gabrielian A.E."/>
            <person name="Garg N.S."/>
            <person name="Gelbart W.M."/>
            <person name="Glasser K."/>
            <person name="Glodek A."/>
            <person name="Gong F."/>
            <person name="Gorrell J.H."/>
            <person name="Gu Z."/>
            <person name="Guan P."/>
            <person name="Harris M."/>
            <person name="Harris N.L."/>
            <person name="Harvey D.A."/>
            <person name="Heiman T.J."/>
            <person name="Hernandez J.R."/>
            <person name="Houck J."/>
            <person name="Hostin D."/>
            <person name="Houston K.A."/>
            <person name="Howland T.J."/>
            <person name="Wei M.-H."/>
            <person name="Ibegwam C."/>
            <person name="Jalali M."/>
            <person name="Kalush F."/>
            <person name="Karpen G.H."/>
            <person name="Ke Z."/>
            <person name="Kennison J.A."/>
            <person name="Ketchum K.A."/>
            <person name="Kimmel B.E."/>
            <person name="Kodira C.D."/>
            <person name="Kraft C.L."/>
            <person name="Kravitz S."/>
            <person name="Kulp D."/>
            <person name="Lai Z."/>
            <person name="Lasko P."/>
            <person name="Lei Y."/>
            <person name="Levitsky A.A."/>
            <person name="Li J.H."/>
            <person name="Li Z."/>
            <person name="Liang Y."/>
            <person name="Lin X."/>
            <person name="Liu X."/>
            <person name="Mattei B."/>
            <person name="McIntosh T.C."/>
            <person name="McLeod M.P."/>
            <person name="McPherson D."/>
            <person name="Merkulov G."/>
            <person name="Milshina N.V."/>
            <person name="Mobarry C."/>
            <person name="Morris J."/>
            <person name="Moshrefi A."/>
            <person name="Mount S.M."/>
            <person name="Moy M."/>
            <person name="Murphy B."/>
            <person name="Murphy L."/>
            <person name="Muzny D.M."/>
            <person name="Nelson D.L."/>
            <person name="Nelson D.R."/>
            <person name="Nelson K.A."/>
            <person name="Nixon K."/>
            <person name="Nusskern D.R."/>
            <person name="Pacleb J.M."/>
            <person name="Palazzolo M."/>
            <person name="Pittman G.S."/>
            <person name="Pan S."/>
            <person name="Pollard J."/>
            <person name="Puri V."/>
            <person name="Reese M.G."/>
            <person name="Reinert K."/>
            <person name="Remington K."/>
            <person name="Saunders R.D.C."/>
            <person name="Scheeler F."/>
            <person name="Shen H."/>
            <person name="Shue B.C."/>
            <person name="Siden-Kiamos I."/>
            <person name="Simpson M."/>
            <person name="Skupski M.P."/>
            <person name="Smith T.J."/>
            <person name="Spier E."/>
            <person name="Spradling A.C."/>
            <person name="Stapleton M."/>
            <person name="Strong R."/>
            <person name="Sun E."/>
            <person name="Svirskas R."/>
            <person name="Tector C."/>
            <person name="Turner R."/>
            <person name="Venter E."/>
            <person name="Wang A.H."/>
            <person name="Wang X."/>
            <person name="Wang Z.-Y."/>
            <person name="Wassarman D.A."/>
            <person name="Weinstock G.M."/>
            <person name="Weissenbach J."/>
            <person name="Williams S.M."/>
            <person name="Woodage T."/>
            <person name="Worley K.C."/>
            <person name="Wu D."/>
            <person name="Yang S."/>
            <person name="Yao Q.A."/>
            <person name="Ye J."/>
            <person name="Yeh R.-F."/>
            <person name="Zaveri J.S."/>
            <person name="Zhan M."/>
            <person name="Zhang G."/>
            <person name="Zhao Q."/>
            <person name="Zheng L."/>
            <person name="Zheng X.H."/>
            <person name="Zhong F.N."/>
            <person name="Zhong W."/>
            <person name="Zhou X."/>
            <person name="Zhu S.C."/>
            <person name="Zhu X."/>
            <person name="Smith H.O."/>
            <person name="Gibbs R.A."/>
            <person name="Myers E.W."/>
            <person name="Rubin G.M."/>
            <person name="Venter J.C."/>
        </authorList>
    </citation>
    <scope>NUCLEOTIDE SEQUENCE [LARGE SCALE GENOMIC DNA]</scope>
    <source>
        <strain>Berkeley</strain>
    </source>
</reference>
<reference key="5">
    <citation type="journal article" date="2002" name="Genome Biol.">
        <title>Annotation of the Drosophila melanogaster euchromatic genome: a systematic review.</title>
        <authorList>
            <person name="Misra S."/>
            <person name="Crosby M.A."/>
            <person name="Mungall C.J."/>
            <person name="Matthews B.B."/>
            <person name="Campbell K.S."/>
            <person name="Hradecky P."/>
            <person name="Huang Y."/>
            <person name="Kaminker J.S."/>
            <person name="Millburn G.H."/>
            <person name="Prochnik S.E."/>
            <person name="Smith C.D."/>
            <person name="Tupy J.L."/>
            <person name="Whitfield E.J."/>
            <person name="Bayraktaroglu L."/>
            <person name="Berman B.P."/>
            <person name="Bettencourt B.R."/>
            <person name="Celniker S.E."/>
            <person name="de Grey A.D.N.J."/>
            <person name="Drysdale R.A."/>
            <person name="Harris N.L."/>
            <person name="Richter J."/>
            <person name="Russo S."/>
            <person name="Schroeder A.J."/>
            <person name="Shu S.Q."/>
            <person name="Stapleton M."/>
            <person name="Yamada C."/>
            <person name="Ashburner M."/>
            <person name="Gelbart W.M."/>
            <person name="Rubin G.M."/>
            <person name="Lewis S.E."/>
        </authorList>
    </citation>
    <scope>GENOME REANNOTATION</scope>
    <source>
        <strain>Berkeley</strain>
    </source>
</reference>
<reference key="6">
    <citation type="submission" date="2005-08" db="EMBL/GenBank/DDBJ databases">
        <authorList>
            <person name="Stapleton M."/>
            <person name="Carlson J.W."/>
            <person name="Chavez C."/>
            <person name="Frise E."/>
            <person name="George R.A."/>
            <person name="Pacleb J.M."/>
            <person name="Park S."/>
            <person name="Wan K.H."/>
            <person name="Yu C."/>
            <person name="Celniker S.E."/>
        </authorList>
    </citation>
    <scope>NUCLEOTIDE SEQUENCE [LARGE SCALE MRNA]</scope>
    <source>
        <strain>Berkeley</strain>
    </source>
</reference>
<reference key="7">
    <citation type="journal article" date="2005" name="Genome Biol.">
        <title>A low-cost open-source SNP genotyping platform for association mapping applications.</title>
        <authorList>
            <person name="Macdonald S.J."/>
            <person name="Pastinen T."/>
            <person name="Genissel A."/>
            <person name="Cornforth T.W."/>
            <person name="Long A.D."/>
        </authorList>
    </citation>
    <scope>NUCLEOTIDE SEQUENCE [GENOMIC DNA] OF 64-173</scope>
    <source>
        <strain>Nv2001_m0376</strain>
        <strain>Nv2001_m0377</strain>
        <strain>Nv2001_m0378</strain>
        <strain>Nv2001_m0379</strain>
        <strain>Nv2001_m0380</strain>
        <strain>Nv2001_m0381</strain>
        <strain>Nv2001_m0382</strain>
        <strain>Nv2001_m0383</strain>
        <strain>Nv2001_m0384</strain>
        <strain>Nv2001_m0385</strain>
        <strain>Nv2001_m0386</strain>
        <strain>Nv2001_m0387</strain>
        <strain>Nv2001_m0388</strain>
        <strain>Nv2001_m0389</strain>
        <strain>Nv2001_m0390</strain>
        <strain>Nv2001_m0391</strain>
        <strain>Nv2001_m0392</strain>
        <strain>Nv2001_m0393</strain>
        <strain>Nv2001_m0394</strain>
        <strain>Nv2001_m0395</strain>
        <strain>Nv2001_m0396</strain>
        <strain>Nv2001_m0397</strain>
        <strain>Nv2001_m0398</strain>
        <strain>Nv2001_m0399</strain>
        <strain>Nv2001_m0400</strain>
        <strain>Nv2001_m0401</strain>
        <strain>Nv2001_m0402</strain>
        <strain>Nv2001_m0403</strain>
        <strain>Nv2001_m0404</strain>
        <strain>Nv2001_m0405</strain>
        <strain>Nv2001_m0406</strain>
        <strain>Nv2001_m0407</strain>
        <strain>Nv2001_m0408</strain>
        <strain>Nv2001_m0409</strain>
        <strain>Nv2001_m0410</strain>
        <strain>Nv2001_m0411</strain>
        <strain>Nv2001_m0412</strain>
        <strain>Nv2001_m0413</strain>
        <strain>Nv2001_m0414</strain>
        <strain>Nv2001_m0415</strain>
        <strain>Nv2001_m0416</strain>
        <strain>Nv2001_m0417</strain>
        <strain>Nv2001_m0418</strain>
        <strain>Nv2001_m0419</strain>
        <strain>Nv2001_m0420</strain>
        <strain>Nv2001_m0421</strain>
        <strain>Nv2001_m0422</strain>
        <strain>Nv2001_m0423</strain>
        <strain>Nv2001_m0424</strain>
        <strain>Nv2001_m0425</strain>
        <strain>Nv2001_m0426</strain>
        <strain>Nv2001_m0427</strain>
        <strain>Nv2001_m0428</strain>
        <strain>Nv2001_m0429</strain>
        <strain>Nv2001_m0430</strain>
        <strain>Nv2001_m0431</strain>
        <strain>Nv2001_m0432</strain>
        <strain>Nv2001_m0433</strain>
        <strain>Nv2001_m0434</strain>
        <strain>Nv2001_m0435</strain>
        <strain>Nv2001_m0436</strain>
        <strain>Nv2001_m0437</strain>
        <strain>Nv2001_m0438</strain>
        <strain>Nv2001_m0439</strain>
        <strain>Nv2001_m0440</strain>
        <strain>Nv2001_m0441</strain>
        <strain>Nv2001_m0442</strain>
        <strain>Nv2001_m0443</strain>
        <strain>Nv2001_m0444</strain>
        <strain>Nv2001_m0445</strain>
        <strain>Nv2001_m0446</strain>
        <strain>Nv2001_m0447</strain>
        <strain>Nv2001_m0448</strain>
        <strain>Nv2001_m0449</strain>
        <strain>Nv2001_m0450</strain>
        <strain>Nv2001_m0451</strain>
        <strain>Nv2001_m0452</strain>
        <strain>Nv2001_m0453</strain>
        <strain>Nv2001_m0454</strain>
        <strain>Nv2001_m0455</strain>
        <strain>Nv2001_m0456</strain>
        <strain>Nv2001_m0457</strain>
        <strain>Nv2001_m0458</strain>
        <strain>Nv2001_m0459</strain>
        <strain>Nv2001_m0460</strain>
        <strain>Nv2001_m0462</strain>
        <strain>Nv2001_m0463</strain>
        <strain>Nv2001_m0464</strain>
        <strain>Nv2001_m0465</strain>
        <strain>Nv2001_m0466</strain>
        <strain>Nv2001_m0467</strain>
        <strain>Nv2001_m0468</strain>
        <strain>Nv2001_m0469</strain>
    </source>
</reference>
<reference key="8">
    <citation type="journal article" date="1994" name="Cell">
        <title>Groucho is required for Drosophila neurogenesis, segmentation, and sex determination and interacts directly with hairy-related bHLH proteins.</title>
        <authorList>
            <person name="Paroush Z."/>
            <person name="Finley R.L. Jr."/>
            <person name="Kidd T."/>
            <person name="Wainwright S.M."/>
            <person name="Ingham P.W."/>
            <person name="Brent R."/>
            <person name="Ish-Horowicz D."/>
        </authorList>
    </citation>
    <scope>DOMAIN WRPW MOTIF</scope>
</reference>
<reference key="9">
    <citation type="journal article" date="2017" name="Dev. Biol.">
        <title>bHLH-O proteins balance the self-renewal and differentiation of Drosophila neural stem cells by regulating Earmuff expression.</title>
        <authorList>
            <person name="Li X."/>
            <person name="Chen R."/>
            <person name="Zhu S."/>
        </authorList>
    </citation>
    <scope>FUNCTION</scope>
    <scope>DISRUPTION PHENOTYPE</scope>
</reference>
<gene>
    <name evidence="11" type="primary">E(spl)mdelta-HLH</name>
    <name evidence="11" type="synonym">HLHmdelta</name>
    <name evidence="11" type="ORF">CG8328</name>
</gene>
<name>ESMD_DROME</name>
<dbReference type="EMBL" id="X67048">
    <property type="protein sequence ID" value="CAA47433.1"/>
    <property type="molecule type" value="mRNA"/>
</dbReference>
<dbReference type="EMBL" id="M96168">
    <property type="protein sequence ID" value="AAA28911.1"/>
    <property type="molecule type" value="Genomic_DNA"/>
</dbReference>
<dbReference type="EMBL" id="AY779906">
    <property type="protein sequence ID" value="AAV59045.1"/>
    <property type="molecule type" value="Genomic_DNA"/>
</dbReference>
<dbReference type="EMBL" id="AY779907">
    <property type="protein sequence ID" value="AAV59057.1"/>
    <property type="molecule type" value="Genomic_DNA"/>
</dbReference>
<dbReference type="EMBL" id="AY779908">
    <property type="protein sequence ID" value="AAV59069.1"/>
    <property type="molecule type" value="Genomic_DNA"/>
</dbReference>
<dbReference type="EMBL" id="AY779909">
    <property type="protein sequence ID" value="AAV59081.1"/>
    <property type="molecule type" value="Genomic_DNA"/>
</dbReference>
<dbReference type="EMBL" id="AY779910">
    <property type="protein sequence ID" value="AAV59093.1"/>
    <property type="molecule type" value="Genomic_DNA"/>
</dbReference>
<dbReference type="EMBL" id="AY779911">
    <property type="protein sequence ID" value="AAV59105.1"/>
    <property type="molecule type" value="Genomic_DNA"/>
</dbReference>
<dbReference type="EMBL" id="AY779912">
    <property type="protein sequence ID" value="AAV59117.1"/>
    <property type="molecule type" value="Genomic_DNA"/>
</dbReference>
<dbReference type="EMBL" id="AY779913">
    <property type="protein sequence ID" value="AAV59129.1"/>
    <property type="molecule type" value="Genomic_DNA"/>
</dbReference>
<dbReference type="EMBL" id="AY779914">
    <property type="protein sequence ID" value="AAV59141.1"/>
    <property type="molecule type" value="Genomic_DNA"/>
</dbReference>
<dbReference type="EMBL" id="AY779915">
    <property type="protein sequence ID" value="AAV59153.1"/>
    <property type="molecule type" value="Genomic_DNA"/>
</dbReference>
<dbReference type="EMBL" id="AY779916">
    <property type="protein sequence ID" value="AAV59165.1"/>
    <property type="molecule type" value="Genomic_DNA"/>
</dbReference>
<dbReference type="EMBL" id="AY779917">
    <property type="protein sequence ID" value="AAV59177.1"/>
    <property type="molecule type" value="Genomic_DNA"/>
</dbReference>
<dbReference type="EMBL" id="AY779918">
    <property type="protein sequence ID" value="AAV59189.1"/>
    <property type="molecule type" value="Genomic_DNA"/>
</dbReference>
<dbReference type="EMBL" id="AY779919">
    <property type="protein sequence ID" value="AAV59201.1"/>
    <property type="molecule type" value="Genomic_DNA"/>
</dbReference>
<dbReference type="EMBL" id="AY779920">
    <property type="protein sequence ID" value="AAV59213.1"/>
    <property type="molecule type" value="Genomic_DNA"/>
</dbReference>
<dbReference type="EMBL" id="AY779921">
    <property type="protein sequence ID" value="AAV59225.1"/>
    <property type="molecule type" value="Genomic_DNA"/>
</dbReference>
<dbReference type="EMBL" id="AE014297">
    <property type="protein sequence ID" value="AAF56544.1"/>
    <property type="molecule type" value="Genomic_DNA"/>
</dbReference>
<dbReference type="EMBL" id="BT022133">
    <property type="protein sequence ID" value="AAY51528.2"/>
    <property type="molecule type" value="mRNA"/>
</dbReference>
<dbReference type="EMBL" id="AY905719">
    <property type="protein sequence ID" value="AAX60065.1"/>
    <property type="molecule type" value="Genomic_DNA"/>
</dbReference>
<dbReference type="EMBL" id="AY905720">
    <property type="protein sequence ID" value="AAX60066.1"/>
    <property type="molecule type" value="Genomic_DNA"/>
</dbReference>
<dbReference type="EMBL" id="AY905721">
    <property type="protein sequence ID" value="AAX60067.1"/>
    <property type="molecule type" value="Genomic_DNA"/>
</dbReference>
<dbReference type="EMBL" id="AY905722">
    <property type="protein sequence ID" value="AAX60068.1"/>
    <property type="molecule type" value="Genomic_DNA"/>
</dbReference>
<dbReference type="EMBL" id="AY905723">
    <property type="protein sequence ID" value="AAX60069.1"/>
    <property type="molecule type" value="Genomic_DNA"/>
</dbReference>
<dbReference type="EMBL" id="AY905724">
    <property type="protein sequence ID" value="AAX60070.1"/>
    <property type="molecule type" value="Genomic_DNA"/>
</dbReference>
<dbReference type="EMBL" id="AY905725">
    <property type="protein sequence ID" value="AAX60071.1"/>
    <property type="molecule type" value="Genomic_DNA"/>
</dbReference>
<dbReference type="EMBL" id="AY905726">
    <property type="protein sequence ID" value="AAX60072.1"/>
    <property type="molecule type" value="Genomic_DNA"/>
</dbReference>
<dbReference type="EMBL" id="AY905727">
    <property type="protein sequence ID" value="AAX60073.1"/>
    <property type="molecule type" value="Genomic_DNA"/>
</dbReference>
<dbReference type="EMBL" id="AY905728">
    <property type="protein sequence ID" value="AAX60074.1"/>
    <property type="molecule type" value="Genomic_DNA"/>
</dbReference>
<dbReference type="EMBL" id="AY905729">
    <property type="protein sequence ID" value="AAX60075.1"/>
    <property type="molecule type" value="Genomic_DNA"/>
</dbReference>
<dbReference type="EMBL" id="AY905730">
    <property type="protein sequence ID" value="AAX60076.1"/>
    <property type="molecule type" value="Genomic_DNA"/>
</dbReference>
<dbReference type="EMBL" id="AY905731">
    <property type="protein sequence ID" value="AAX60077.1"/>
    <property type="molecule type" value="Genomic_DNA"/>
</dbReference>
<dbReference type="EMBL" id="AY905732">
    <property type="protein sequence ID" value="AAX60078.1"/>
    <property type="molecule type" value="Genomic_DNA"/>
</dbReference>
<dbReference type="EMBL" id="AY905733">
    <property type="protein sequence ID" value="AAX60079.1"/>
    <property type="molecule type" value="Genomic_DNA"/>
</dbReference>
<dbReference type="EMBL" id="AY905734">
    <property type="protein sequence ID" value="AAX60080.1"/>
    <property type="molecule type" value="Genomic_DNA"/>
</dbReference>
<dbReference type="EMBL" id="AY905735">
    <property type="protein sequence ID" value="AAX60081.1"/>
    <property type="molecule type" value="Genomic_DNA"/>
</dbReference>
<dbReference type="EMBL" id="AY905736">
    <property type="protein sequence ID" value="AAX60082.1"/>
    <property type="molecule type" value="Genomic_DNA"/>
</dbReference>
<dbReference type="EMBL" id="AY905737">
    <property type="protein sequence ID" value="AAX60083.1"/>
    <property type="molecule type" value="Genomic_DNA"/>
</dbReference>
<dbReference type="EMBL" id="AY905738">
    <property type="protein sequence ID" value="AAX60084.1"/>
    <property type="molecule type" value="Genomic_DNA"/>
</dbReference>
<dbReference type="EMBL" id="AY905739">
    <property type="protein sequence ID" value="AAX60085.1"/>
    <property type="molecule type" value="Genomic_DNA"/>
</dbReference>
<dbReference type="EMBL" id="AY905740">
    <property type="protein sequence ID" value="AAX60086.1"/>
    <property type="molecule type" value="Genomic_DNA"/>
</dbReference>
<dbReference type="EMBL" id="AY905741">
    <property type="protein sequence ID" value="AAX60087.1"/>
    <property type="molecule type" value="Genomic_DNA"/>
</dbReference>
<dbReference type="EMBL" id="AY905742">
    <property type="protein sequence ID" value="AAX60088.1"/>
    <property type="molecule type" value="Genomic_DNA"/>
</dbReference>
<dbReference type="EMBL" id="AY905743">
    <property type="protein sequence ID" value="AAX60089.1"/>
    <property type="molecule type" value="Genomic_DNA"/>
</dbReference>
<dbReference type="EMBL" id="AY905744">
    <property type="protein sequence ID" value="AAX60090.1"/>
    <property type="molecule type" value="Genomic_DNA"/>
</dbReference>
<dbReference type="EMBL" id="AY905745">
    <property type="protein sequence ID" value="AAX60091.1"/>
    <property type="molecule type" value="Genomic_DNA"/>
</dbReference>
<dbReference type="EMBL" id="AY905746">
    <property type="protein sequence ID" value="AAX60092.1"/>
    <property type="molecule type" value="Genomic_DNA"/>
</dbReference>
<dbReference type="EMBL" id="AY905747">
    <property type="protein sequence ID" value="AAX60093.1"/>
    <property type="molecule type" value="Genomic_DNA"/>
</dbReference>
<dbReference type="EMBL" id="AY905748">
    <property type="protein sequence ID" value="AAX60094.1"/>
    <property type="molecule type" value="Genomic_DNA"/>
</dbReference>
<dbReference type="EMBL" id="AY905749">
    <property type="protein sequence ID" value="AAX60095.1"/>
    <property type="molecule type" value="Genomic_DNA"/>
</dbReference>
<dbReference type="EMBL" id="AY905750">
    <property type="protein sequence ID" value="AAX60096.1"/>
    <property type="molecule type" value="Genomic_DNA"/>
</dbReference>
<dbReference type="EMBL" id="AY905751">
    <property type="protein sequence ID" value="AAX60097.1"/>
    <property type="molecule type" value="Genomic_DNA"/>
</dbReference>
<dbReference type="EMBL" id="AY905752">
    <property type="protein sequence ID" value="AAX60098.1"/>
    <property type="molecule type" value="Genomic_DNA"/>
</dbReference>
<dbReference type="EMBL" id="AY905753">
    <property type="protein sequence ID" value="AAX60099.1"/>
    <property type="molecule type" value="Genomic_DNA"/>
</dbReference>
<dbReference type="EMBL" id="AY905754">
    <property type="protein sequence ID" value="AAX60100.1"/>
    <property type="molecule type" value="Genomic_DNA"/>
</dbReference>
<dbReference type="EMBL" id="AY905755">
    <property type="protein sequence ID" value="AAX60101.1"/>
    <property type="molecule type" value="Genomic_DNA"/>
</dbReference>
<dbReference type="EMBL" id="AY905756">
    <property type="protein sequence ID" value="AAX60102.1"/>
    <property type="molecule type" value="Genomic_DNA"/>
</dbReference>
<dbReference type="EMBL" id="AY905757">
    <property type="protein sequence ID" value="AAX60103.1"/>
    <property type="molecule type" value="Genomic_DNA"/>
</dbReference>
<dbReference type="EMBL" id="AY905758">
    <property type="protein sequence ID" value="AAX60104.1"/>
    <property type="molecule type" value="Genomic_DNA"/>
</dbReference>
<dbReference type="EMBL" id="AY905759">
    <property type="protein sequence ID" value="AAX60105.1"/>
    <property type="molecule type" value="Genomic_DNA"/>
</dbReference>
<dbReference type="EMBL" id="AY905760">
    <property type="protein sequence ID" value="AAX60106.1"/>
    <property type="molecule type" value="Genomic_DNA"/>
</dbReference>
<dbReference type="EMBL" id="AY905761">
    <property type="protein sequence ID" value="AAX60107.1"/>
    <property type="molecule type" value="Genomic_DNA"/>
</dbReference>
<dbReference type="EMBL" id="AY905762">
    <property type="protein sequence ID" value="AAX60108.1"/>
    <property type="molecule type" value="Genomic_DNA"/>
</dbReference>
<dbReference type="EMBL" id="AY905763">
    <property type="protein sequence ID" value="AAX60109.1"/>
    <property type="molecule type" value="Genomic_DNA"/>
</dbReference>
<dbReference type="EMBL" id="AY905764">
    <property type="protein sequence ID" value="AAX60110.1"/>
    <property type="molecule type" value="Genomic_DNA"/>
</dbReference>
<dbReference type="EMBL" id="AY905765">
    <property type="protein sequence ID" value="AAX60111.1"/>
    <property type="molecule type" value="Genomic_DNA"/>
</dbReference>
<dbReference type="EMBL" id="AY905766">
    <property type="protein sequence ID" value="AAX60112.1"/>
    <property type="molecule type" value="Genomic_DNA"/>
</dbReference>
<dbReference type="EMBL" id="AY905767">
    <property type="protein sequence ID" value="AAX60113.1"/>
    <property type="molecule type" value="Genomic_DNA"/>
</dbReference>
<dbReference type="EMBL" id="AY905768">
    <property type="protein sequence ID" value="AAX60114.1"/>
    <property type="molecule type" value="Genomic_DNA"/>
</dbReference>
<dbReference type="EMBL" id="AY905769">
    <property type="protein sequence ID" value="AAX60115.1"/>
    <property type="molecule type" value="Genomic_DNA"/>
</dbReference>
<dbReference type="EMBL" id="AY905770">
    <property type="protein sequence ID" value="AAX60116.1"/>
    <property type="molecule type" value="Genomic_DNA"/>
</dbReference>
<dbReference type="EMBL" id="AY905771">
    <property type="protein sequence ID" value="AAX60117.1"/>
    <property type="molecule type" value="Genomic_DNA"/>
</dbReference>
<dbReference type="EMBL" id="AY905772">
    <property type="protein sequence ID" value="AAX60118.1"/>
    <property type="molecule type" value="Genomic_DNA"/>
</dbReference>
<dbReference type="EMBL" id="AY905773">
    <property type="protein sequence ID" value="AAX60119.1"/>
    <property type="molecule type" value="Genomic_DNA"/>
</dbReference>
<dbReference type="EMBL" id="AY905774">
    <property type="protein sequence ID" value="AAX60120.1"/>
    <property type="molecule type" value="Genomic_DNA"/>
</dbReference>
<dbReference type="EMBL" id="AY905775">
    <property type="protein sequence ID" value="AAX60121.1"/>
    <property type="molecule type" value="Genomic_DNA"/>
</dbReference>
<dbReference type="EMBL" id="AY905776">
    <property type="protein sequence ID" value="AAX60122.1"/>
    <property type="molecule type" value="Genomic_DNA"/>
</dbReference>
<dbReference type="EMBL" id="AY905777">
    <property type="protein sequence ID" value="AAX60123.1"/>
    <property type="molecule type" value="Genomic_DNA"/>
</dbReference>
<dbReference type="EMBL" id="AY905778">
    <property type="protein sequence ID" value="AAX60124.1"/>
    <property type="molecule type" value="Genomic_DNA"/>
</dbReference>
<dbReference type="EMBL" id="AY905779">
    <property type="protein sequence ID" value="AAX60125.1"/>
    <property type="molecule type" value="Genomic_DNA"/>
</dbReference>
<dbReference type="EMBL" id="AY905780">
    <property type="protein sequence ID" value="AAX60126.1"/>
    <property type="molecule type" value="Genomic_DNA"/>
</dbReference>
<dbReference type="EMBL" id="AY905781">
    <property type="protein sequence ID" value="AAX60127.1"/>
    <property type="molecule type" value="Genomic_DNA"/>
</dbReference>
<dbReference type="EMBL" id="AY905782">
    <property type="protein sequence ID" value="AAX60128.1"/>
    <property type="molecule type" value="Genomic_DNA"/>
</dbReference>
<dbReference type="EMBL" id="AY905783">
    <property type="protein sequence ID" value="AAX60129.1"/>
    <property type="molecule type" value="Genomic_DNA"/>
</dbReference>
<dbReference type="EMBL" id="AY905784">
    <property type="protein sequence ID" value="AAX60130.1"/>
    <property type="molecule type" value="Genomic_DNA"/>
</dbReference>
<dbReference type="EMBL" id="AY905785">
    <property type="protein sequence ID" value="AAX60131.1"/>
    <property type="molecule type" value="Genomic_DNA"/>
</dbReference>
<dbReference type="EMBL" id="AY905786">
    <property type="protein sequence ID" value="AAX60132.1"/>
    <property type="molecule type" value="Genomic_DNA"/>
</dbReference>
<dbReference type="EMBL" id="AY905787">
    <property type="protein sequence ID" value="AAX60133.1"/>
    <property type="molecule type" value="Genomic_DNA"/>
</dbReference>
<dbReference type="EMBL" id="AY905788">
    <property type="protein sequence ID" value="AAX60134.1"/>
    <property type="molecule type" value="Genomic_DNA"/>
</dbReference>
<dbReference type="EMBL" id="AY905789">
    <property type="protein sequence ID" value="AAX60135.1"/>
    <property type="molecule type" value="Genomic_DNA"/>
</dbReference>
<dbReference type="EMBL" id="AY905790">
    <property type="protein sequence ID" value="AAX60136.1"/>
    <property type="molecule type" value="Genomic_DNA"/>
</dbReference>
<dbReference type="EMBL" id="AY905791">
    <property type="protein sequence ID" value="AAX60137.1"/>
    <property type="molecule type" value="Genomic_DNA"/>
</dbReference>
<dbReference type="EMBL" id="AY905792">
    <property type="protein sequence ID" value="AAX60138.1"/>
    <property type="molecule type" value="Genomic_DNA"/>
</dbReference>
<dbReference type="EMBL" id="AY905793">
    <property type="protein sequence ID" value="AAX60139.1"/>
    <property type="molecule type" value="Genomic_DNA"/>
</dbReference>
<dbReference type="EMBL" id="AY905794">
    <property type="protein sequence ID" value="AAX60140.1"/>
    <property type="molecule type" value="Genomic_DNA"/>
</dbReference>
<dbReference type="EMBL" id="AY905795">
    <property type="protein sequence ID" value="AAX60141.1"/>
    <property type="molecule type" value="Genomic_DNA"/>
</dbReference>
<dbReference type="EMBL" id="AY905796">
    <property type="protein sequence ID" value="AAX60142.1"/>
    <property type="molecule type" value="Genomic_DNA"/>
</dbReference>
<dbReference type="EMBL" id="AY905797">
    <property type="protein sequence ID" value="AAX60143.1"/>
    <property type="molecule type" value="Genomic_DNA"/>
</dbReference>
<dbReference type="EMBL" id="AY905798">
    <property type="protein sequence ID" value="AAX60144.1"/>
    <property type="molecule type" value="Genomic_DNA"/>
</dbReference>
<dbReference type="EMBL" id="AY905799">
    <property type="protein sequence ID" value="AAX60145.1"/>
    <property type="molecule type" value="Genomic_DNA"/>
</dbReference>
<dbReference type="EMBL" id="AY905800">
    <property type="protein sequence ID" value="AAX60146.1"/>
    <property type="molecule type" value="Genomic_DNA"/>
</dbReference>
<dbReference type="EMBL" id="AY905801">
    <property type="protein sequence ID" value="AAX60147.1"/>
    <property type="molecule type" value="Genomic_DNA"/>
</dbReference>
<dbReference type="EMBL" id="AY905802">
    <property type="protein sequence ID" value="AAX60148.1"/>
    <property type="molecule type" value="Genomic_DNA"/>
</dbReference>
<dbReference type="EMBL" id="AY905803">
    <property type="protein sequence ID" value="AAX60149.1"/>
    <property type="molecule type" value="Genomic_DNA"/>
</dbReference>
<dbReference type="EMBL" id="AY905804">
    <property type="protein sequence ID" value="AAX60150.1"/>
    <property type="molecule type" value="Genomic_DNA"/>
</dbReference>
<dbReference type="EMBL" id="AY905805">
    <property type="protein sequence ID" value="AAX60151.1"/>
    <property type="molecule type" value="Genomic_DNA"/>
</dbReference>
<dbReference type="EMBL" id="AY905806">
    <property type="protein sequence ID" value="AAX60152.1"/>
    <property type="molecule type" value="Genomic_DNA"/>
</dbReference>
<dbReference type="EMBL" id="AY905807">
    <property type="protein sequence ID" value="AAX60153.1"/>
    <property type="molecule type" value="Genomic_DNA"/>
</dbReference>
<dbReference type="EMBL" id="AY905808">
    <property type="protein sequence ID" value="AAX60154.1"/>
    <property type="molecule type" value="Genomic_DNA"/>
</dbReference>
<dbReference type="EMBL" id="AY905809">
    <property type="protein sequence ID" value="AAX60155.1"/>
    <property type="molecule type" value="Genomic_DNA"/>
</dbReference>
<dbReference type="EMBL" id="AY905810">
    <property type="protein sequence ID" value="AAX60156.1"/>
    <property type="molecule type" value="Genomic_DNA"/>
</dbReference>
<dbReference type="EMBL" id="AY905811">
    <property type="protein sequence ID" value="AAX60157.1"/>
    <property type="molecule type" value="Genomic_DNA"/>
</dbReference>
<dbReference type="PIR" id="A46177">
    <property type="entry name" value="A46177"/>
</dbReference>
<dbReference type="RefSeq" id="NP_524503.2">
    <property type="nucleotide sequence ID" value="NM_079779.3"/>
</dbReference>
<dbReference type="SMR" id="Q01071"/>
<dbReference type="BioGRID" id="68050">
    <property type="interactions" value="36"/>
</dbReference>
<dbReference type="DIP" id="DIP-722N"/>
<dbReference type="ELM" id="Q01071"/>
<dbReference type="FunCoup" id="Q01071">
    <property type="interactions" value="44"/>
</dbReference>
<dbReference type="IntAct" id="Q01071">
    <property type="interactions" value="30"/>
</dbReference>
<dbReference type="STRING" id="7227.FBpp0084328"/>
<dbReference type="PaxDb" id="7227-FBpp0084328"/>
<dbReference type="EnsemblMetazoa" id="FBtr0084954">
    <property type="protein sequence ID" value="FBpp0084328"/>
    <property type="gene ID" value="FBgn0002734"/>
</dbReference>
<dbReference type="GeneID" id="43150"/>
<dbReference type="KEGG" id="dme:Dmel_CG8328"/>
<dbReference type="AGR" id="FB:FBgn0002734"/>
<dbReference type="CTD" id="43150"/>
<dbReference type="FlyBase" id="FBgn0002734">
    <property type="gene designation" value="E(spl)mdelta-HLH"/>
</dbReference>
<dbReference type="VEuPathDB" id="VectorBase:FBgn0002734"/>
<dbReference type="eggNOG" id="KOG4304">
    <property type="taxonomic scope" value="Eukaryota"/>
</dbReference>
<dbReference type="GeneTree" id="ENSGT00940000167178"/>
<dbReference type="HOGENOM" id="CLU_068550_2_2_1"/>
<dbReference type="InParanoid" id="Q01071"/>
<dbReference type="OMA" id="AHNLGKH"/>
<dbReference type="OrthoDB" id="6085656at2759"/>
<dbReference type="PhylomeDB" id="Q01071"/>
<dbReference type="SignaLink" id="Q01071"/>
<dbReference type="BioGRID-ORCS" id="43150">
    <property type="hits" value="0 hits in 3 CRISPR screens"/>
</dbReference>
<dbReference type="GenomeRNAi" id="43150"/>
<dbReference type="PRO" id="PR:Q01071"/>
<dbReference type="Proteomes" id="UP000000803">
    <property type="component" value="Chromosome 3R"/>
</dbReference>
<dbReference type="Bgee" id="FBgn0002734">
    <property type="expression patterns" value="Expressed in eye disc (Drosophila) and 31 other cell types or tissues"/>
</dbReference>
<dbReference type="GO" id="GO:0005634">
    <property type="term" value="C:nucleus"/>
    <property type="evidence" value="ECO:0000318"/>
    <property type="project" value="GO_Central"/>
</dbReference>
<dbReference type="GO" id="GO:0046983">
    <property type="term" value="F:protein dimerization activity"/>
    <property type="evidence" value="ECO:0007669"/>
    <property type="project" value="InterPro"/>
</dbReference>
<dbReference type="GO" id="GO:0000978">
    <property type="term" value="F:RNA polymerase II cis-regulatory region sequence-specific DNA binding"/>
    <property type="evidence" value="ECO:0000318"/>
    <property type="project" value="GO_Central"/>
</dbReference>
<dbReference type="GO" id="GO:0043565">
    <property type="term" value="F:sequence-specific DNA binding"/>
    <property type="evidence" value="ECO:0000314"/>
    <property type="project" value="FlyBase"/>
</dbReference>
<dbReference type="GO" id="GO:1990837">
    <property type="term" value="F:sequence-specific double-stranded DNA binding"/>
    <property type="evidence" value="ECO:0000314"/>
    <property type="project" value="UniProtKB"/>
</dbReference>
<dbReference type="GO" id="GO:0000122">
    <property type="term" value="P:negative regulation of transcription by RNA polymerase II"/>
    <property type="evidence" value="ECO:0000314"/>
    <property type="project" value="FlyBase"/>
</dbReference>
<dbReference type="GO" id="GO:0007219">
    <property type="term" value="P:Notch signaling pathway"/>
    <property type="evidence" value="ECO:0007669"/>
    <property type="project" value="UniProtKB-KW"/>
</dbReference>
<dbReference type="GO" id="GO:0048052">
    <property type="term" value="P:R1/R6 cell differentiation"/>
    <property type="evidence" value="ECO:0000315"/>
    <property type="project" value="FlyBase"/>
</dbReference>
<dbReference type="GO" id="GO:0045466">
    <property type="term" value="P:R7 cell differentiation"/>
    <property type="evidence" value="ECO:0000315"/>
    <property type="project" value="FlyBase"/>
</dbReference>
<dbReference type="GO" id="GO:1902692">
    <property type="term" value="P:regulation of neuroblast proliferation"/>
    <property type="evidence" value="ECO:0000315"/>
    <property type="project" value="UniProtKB"/>
</dbReference>
<dbReference type="GO" id="GO:0050767">
    <property type="term" value="P:regulation of neurogenesis"/>
    <property type="evidence" value="ECO:0000318"/>
    <property type="project" value="GO_Central"/>
</dbReference>
<dbReference type="GO" id="GO:0007525">
    <property type="term" value="P:somatic muscle development"/>
    <property type="evidence" value="ECO:0000315"/>
    <property type="project" value="FlyBase"/>
</dbReference>
<dbReference type="CDD" id="cd19741">
    <property type="entry name" value="bHLH-O_ESMB_like"/>
    <property type="match status" value="1"/>
</dbReference>
<dbReference type="FunFam" id="4.10.280.10:FF:000009">
    <property type="entry name" value="Transcription factor HES-1"/>
    <property type="match status" value="1"/>
</dbReference>
<dbReference type="Gene3D" id="4.10.280.10">
    <property type="entry name" value="Helix-loop-helix DNA-binding domain"/>
    <property type="match status" value="1"/>
</dbReference>
<dbReference type="InterPro" id="IPR011598">
    <property type="entry name" value="bHLH_dom"/>
</dbReference>
<dbReference type="InterPro" id="IPR050370">
    <property type="entry name" value="HES_HEY"/>
</dbReference>
<dbReference type="InterPro" id="IPR036638">
    <property type="entry name" value="HLH_DNA-bd_sf"/>
</dbReference>
<dbReference type="InterPro" id="IPR003650">
    <property type="entry name" value="Orange_dom"/>
</dbReference>
<dbReference type="PANTHER" id="PTHR10985">
    <property type="entry name" value="BASIC HELIX-LOOP-HELIX TRANSCRIPTION FACTOR, HES-RELATED"/>
    <property type="match status" value="1"/>
</dbReference>
<dbReference type="Pfam" id="PF07527">
    <property type="entry name" value="Hairy_orange"/>
    <property type="match status" value="1"/>
</dbReference>
<dbReference type="Pfam" id="PF00010">
    <property type="entry name" value="HLH"/>
    <property type="match status" value="1"/>
</dbReference>
<dbReference type="SMART" id="SM00353">
    <property type="entry name" value="HLH"/>
    <property type="match status" value="1"/>
</dbReference>
<dbReference type="SMART" id="SM00511">
    <property type="entry name" value="ORANGE"/>
    <property type="match status" value="1"/>
</dbReference>
<dbReference type="SUPFAM" id="SSF47459">
    <property type="entry name" value="HLH, helix-loop-helix DNA-binding domain"/>
    <property type="match status" value="1"/>
</dbReference>
<dbReference type="SUPFAM" id="SSF158457">
    <property type="entry name" value="Orange domain-like"/>
    <property type="match status" value="1"/>
</dbReference>
<dbReference type="PROSITE" id="PS50888">
    <property type="entry name" value="BHLH"/>
    <property type="match status" value="1"/>
</dbReference>
<dbReference type="PROSITE" id="PS51054">
    <property type="entry name" value="ORANGE"/>
    <property type="match status" value="1"/>
</dbReference>
<proteinExistence type="evidence at protein level"/>
<sequence length="173" mass="20195">MAVQGQRFMTKTQHYRKVTKPLLERKRRARMNLYLDELKDLIVDTMDAQGEQVSKLEKADILELTVNYLKAQQQQRVANPQSPPPDQVNLDKFRAGYTQAAYEVSHIFSTVPGLDLKFGTHLMKQLGHQLKDMKQEEEIIDMAEEPVNLADQKRSKSPREEDIHHGEEVWRPW</sequence>
<evidence type="ECO:0000250" key="1">
    <source>
        <dbReference type="UniProtKB" id="P14003"/>
    </source>
</evidence>
<evidence type="ECO:0000250" key="2">
    <source>
        <dbReference type="UniProtKB" id="Q26263"/>
    </source>
</evidence>
<evidence type="ECO:0000255" key="3">
    <source>
        <dbReference type="PROSITE-ProRule" id="PRU00380"/>
    </source>
</evidence>
<evidence type="ECO:0000255" key="4">
    <source>
        <dbReference type="PROSITE-ProRule" id="PRU00981"/>
    </source>
</evidence>
<evidence type="ECO:0000256" key="5">
    <source>
        <dbReference type="SAM" id="MobiDB-lite"/>
    </source>
</evidence>
<evidence type="ECO:0000269" key="6">
    <source>
    </source>
</evidence>
<evidence type="ECO:0000269" key="7">
    <source>
    </source>
</evidence>
<evidence type="ECO:0000269" key="8">
    <source>
    </source>
</evidence>
<evidence type="ECO:0000269" key="9">
    <source>
    </source>
</evidence>
<evidence type="ECO:0000305" key="10"/>
<evidence type="ECO:0000312" key="11">
    <source>
        <dbReference type="FlyBase" id="FBgn0002734"/>
    </source>
</evidence>
<keyword id="KW-0217">Developmental protein</keyword>
<keyword id="KW-0221">Differentiation</keyword>
<keyword id="KW-0238">DNA-binding</keyword>
<keyword id="KW-0524">Neurogenesis</keyword>
<keyword id="KW-0914">Notch signaling pathway</keyword>
<keyword id="KW-0539">Nucleus</keyword>
<keyword id="KW-1185">Reference proteome</keyword>
<keyword id="KW-0804">Transcription</keyword>
<keyword id="KW-0805">Transcription regulation</keyword>
<feature type="chain" id="PRO_0000127178" description="Enhancer of split mdelta protein">
    <location>
        <begin position="1"/>
        <end position="173"/>
    </location>
</feature>
<feature type="domain" description="bHLH" evidence="4">
    <location>
        <begin position="15"/>
        <end position="72"/>
    </location>
</feature>
<feature type="domain" description="Orange" evidence="3">
    <location>
        <begin position="93"/>
        <end position="126"/>
    </location>
</feature>
<feature type="region of interest" description="Disordered" evidence="5">
    <location>
        <begin position="147"/>
        <end position="173"/>
    </location>
</feature>
<feature type="short sequence motif" description="WRPW motif">
    <location>
        <begin position="170"/>
        <end position="173"/>
    </location>
</feature>
<feature type="compositionally biased region" description="Basic and acidic residues" evidence="5">
    <location>
        <begin position="151"/>
        <end position="173"/>
    </location>
</feature>
<feature type="sequence variant" description="In strain: NVIII-42 and NVIII-18.">
    <original>H</original>
    <variation>R</variation>
    <location>
        <position position="121"/>
    </location>
</feature>
<feature type="sequence variant" description="In strain: NVIII-m11.">
    <original>D</original>
    <variation>V</variation>
    <location>
        <position position="162"/>
    </location>
</feature>
<feature type="sequence conflict" description="In Ref. 2; CAA47433." evidence="10" ref="2">
    <original>S</original>
    <variation>W</variation>
    <location>
        <position position="82"/>
    </location>
</feature>
<organism>
    <name type="scientific">Drosophila melanogaster</name>
    <name type="common">Fruit fly</name>
    <dbReference type="NCBI Taxonomy" id="7227"/>
    <lineage>
        <taxon>Eukaryota</taxon>
        <taxon>Metazoa</taxon>
        <taxon>Ecdysozoa</taxon>
        <taxon>Arthropoda</taxon>
        <taxon>Hexapoda</taxon>
        <taxon>Insecta</taxon>
        <taxon>Pterygota</taxon>
        <taxon>Neoptera</taxon>
        <taxon>Endopterygota</taxon>
        <taxon>Diptera</taxon>
        <taxon>Brachycera</taxon>
        <taxon>Muscomorpha</taxon>
        <taxon>Ephydroidea</taxon>
        <taxon>Drosophilidae</taxon>
        <taxon>Drosophila</taxon>
        <taxon>Sophophora</taxon>
    </lineage>
</organism>